<name>TRAY2_ECOLX</name>
<keyword id="KW-0010">Activator</keyword>
<keyword id="KW-0184">Conjugation</keyword>
<keyword id="KW-0963">Cytoplasm</keyword>
<keyword id="KW-0238">DNA-binding</keyword>
<keyword id="KW-0614">Plasmid</keyword>
<keyword id="KW-0804">Transcription</keyword>
<keyword id="KW-0805">Transcription regulation</keyword>
<sequence>MRRRNARGGISRTVSVYLDEDTNNRLIRAKDRSGRSKTIEVQIRLRDHLKRFPDFYNEEIFREVIEENESTFKEL</sequence>
<organism>
    <name type="scientific">Escherichia coli</name>
    <dbReference type="NCBI Taxonomy" id="562"/>
    <lineage>
        <taxon>Bacteria</taxon>
        <taxon>Pseudomonadati</taxon>
        <taxon>Pseudomonadota</taxon>
        <taxon>Gammaproteobacteria</taxon>
        <taxon>Enterobacterales</taxon>
        <taxon>Enterobacteriaceae</taxon>
        <taxon>Escherichia</taxon>
    </lineage>
</organism>
<accession>P10512</accession>
<accession>P12251</accession>
<evidence type="ECO:0000250" key="1"/>
<evidence type="ECO:0000305" key="2"/>
<gene>
    <name type="primary">traY</name>
</gene>
<comment type="function">
    <text evidence="1">Conjugative DNA transfer (CDT) is the unidirectional transfer of ssDNA plasmid from a donor to a recipient cell. It is the central mechanism by which antibiotic resistance and virulence factors are propagated in bacterial populations. Part of the relaxosome, which facilitates a site- and strand-specific cut in the origin of transfer by TraI, at the nic site. Relaxosome formation requires binding of IHF and TraY to the oriT region, which then facilitates binding of TraI. Also positively regulates tra gene expression (By similarity).</text>
</comment>
<comment type="subunit">
    <text evidence="1">Part of the relaxosome, a complex composed of plasmid encoded TraI, TraM, TraY and host-encoded IHF bound to the F plasmid origin of transfer (oriT). Interacts with TraM, probably through its C-terminus (By similarity).</text>
</comment>
<comment type="subcellular location">
    <subcellularLocation>
        <location evidence="1">Cytoplasm</location>
    </subcellularLocation>
</comment>
<comment type="similarity">
    <text evidence="2">Belongs to the TraY family.</text>
</comment>
<reference key="1">
    <citation type="journal article" date="1986" name="J. Bacteriol.">
        <title>Nucleotide sequences of the R1-19 plasmid transfer genes traM, finP, traJ, and traY and the traYZ promoter.</title>
        <authorList>
            <person name="Finlay B.B."/>
            <person name="Frost L.S."/>
            <person name="Paranchych W."/>
        </authorList>
    </citation>
    <scope>NUCLEOTIDE SEQUENCE [GENOMIC DNA]</scope>
</reference>
<reference key="2">
    <citation type="journal article" date="1989" name="Nucleic Acids Res.">
        <title>A stable core region of the tra operon mRNA of plasmid R1-19.</title>
        <authorList>
            <person name="Koraimann G.M."/>
            <person name="Hoegenauer G."/>
        </authorList>
    </citation>
    <scope>NUCLEOTIDE SEQUENCE [GENOMIC DNA]</scope>
</reference>
<proteinExistence type="inferred from homology"/>
<protein>
    <recommendedName>
        <fullName>Relaxosome protein TraY</fullName>
    </recommendedName>
</protein>
<feature type="chain" id="PRO_0000068481" description="Relaxosome protein TraY">
    <location>
        <begin position="1"/>
        <end position="75"/>
    </location>
</feature>
<geneLocation type="plasmid">
    <name>IncFII R1-19</name>
    <name>R1 drd-19</name>
</geneLocation>
<dbReference type="EMBL" id="X13681">
    <property type="protein sequence ID" value="CAA31972.1"/>
    <property type="molecule type" value="Genomic_DNA"/>
</dbReference>
<dbReference type="EMBL" id="AH003433">
    <property type="protein sequence ID" value="AAA92658.1"/>
    <property type="molecule type" value="Genomic_DNA"/>
</dbReference>
<dbReference type="PIR" id="C24544">
    <property type="entry name" value="C24544"/>
</dbReference>
<dbReference type="RefSeq" id="WP_001254388.1">
    <property type="nucleotide sequence ID" value="NZ_WWEV01000072.1"/>
</dbReference>
<dbReference type="RefSeq" id="YP_003108301.1">
    <property type="nucleotide sequence ID" value="NC_013122.1"/>
</dbReference>
<dbReference type="RefSeq" id="YP_003829133.1">
    <property type="nucleotide sequence ID" value="NC_014384.1"/>
</dbReference>
<dbReference type="RefSeq" id="YP_003829258.1">
    <property type="nucleotide sequence ID" value="NC_014385.1"/>
</dbReference>
<dbReference type="SMR" id="P10512"/>
<dbReference type="OMA" id="QRYPDFY"/>
<dbReference type="GO" id="GO:0005737">
    <property type="term" value="C:cytoplasm"/>
    <property type="evidence" value="ECO:0007669"/>
    <property type="project" value="UniProtKB-SubCell"/>
</dbReference>
<dbReference type="GO" id="GO:0003677">
    <property type="term" value="F:DNA binding"/>
    <property type="evidence" value="ECO:0007669"/>
    <property type="project" value="UniProtKB-KW"/>
</dbReference>
<dbReference type="InterPro" id="IPR008876">
    <property type="entry name" value="TraY"/>
</dbReference>
<dbReference type="NCBIfam" id="NF010302">
    <property type="entry name" value="PRK13740.1-3"/>
    <property type="match status" value="1"/>
</dbReference>
<dbReference type="Pfam" id="PF05509">
    <property type="entry name" value="TraY"/>
    <property type="match status" value="1"/>
</dbReference>